<gene>
    <name type="primary">SCX</name>
    <name type="synonym">BHLHA41</name>
    <name type="synonym">BHLHA48</name>
    <name type="synonym">SCXA</name>
    <name type="synonym">SCXB</name>
</gene>
<protein>
    <recommendedName>
        <fullName>Basic helix-loop-helix transcription factor scleraxis</fullName>
    </recommendedName>
    <alternativeName>
        <fullName>Class A basic helix-loop-helix protein 41</fullName>
        <shortName>bHLHa41</shortName>
    </alternativeName>
    <alternativeName>
        <fullName>Class A basic helix-loop-helix protein 48</fullName>
        <shortName>bHLHa48</shortName>
    </alternativeName>
</protein>
<accession>Q7RTU7</accession>
<reference key="1">
    <citation type="journal article" date="2006" name="Nature">
        <title>DNA sequence and analysis of human chromosome 8.</title>
        <authorList>
            <person name="Nusbaum C."/>
            <person name="Mikkelsen T.S."/>
            <person name="Zody M.C."/>
            <person name="Asakawa S."/>
            <person name="Taudien S."/>
            <person name="Garber M."/>
            <person name="Kodira C.D."/>
            <person name="Schueler M.G."/>
            <person name="Shimizu A."/>
            <person name="Whittaker C.A."/>
            <person name="Chang J.L."/>
            <person name="Cuomo C.A."/>
            <person name="Dewar K."/>
            <person name="FitzGerald M.G."/>
            <person name="Yang X."/>
            <person name="Allen N.R."/>
            <person name="Anderson S."/>
            <person name="Asakawa T."/>
            <person name="Blechschmidt K."/>
            <person name="Bloom T."/>
            <person name="Borowsky M.L."/>
            <person name="Butler J."/>
            <person name="Cook A."/>
            <person name="Corum B."/>
            <person name="DeArellano K."/>
            <person name="DeCaprio D."/>
            <person name="Dooley K.T."/>
            <person name="Dorris L. III"/>
            <person name="Engels R."/>
            <person name="Gloeckner G."/>
            <person name="Hafez N."/>
            <person name="Hagopian D.S."/>
            <person name="Hall J.L."/>
            <person name="Ishikawa S.K."/>
            <person name="Jaffe D.B."/>
            <person name="Kamat A."/>
            <person name="Kudoh J."/>
            <person name="Lehmann R."/>
            <person name="Lokitsang T."/>
            <person name="Macdonald P."/>
            <person name="Major J.E."/>
            <person name="Matthews C.D."/>
            <person name="Mauceli E."/>
            <person name="Menzel U."/>
            <person name="Mihalev A.H."/>
            <person name="Minoshima S."/>
            <person name="Murayama Y."/>
            <person name="Naylor J.W."/>
            <person name="Nicol R."/>
            <person name="Nguyen C."/>
            <person name="O'Leary S.B."/>
            <person name="O'Neill K."/>
            <person name="Parker S.C.J."/>
            <person name="Polley A."/>
            <person name="Raymond C.K."/>
            <person name="Reichwald K."/>
            <person name="Rodriguez J."/>
            <person name="Sasaki T."/>
            <person name="Schilhabel M."/>
            <person name="Siddiqui R."/>
            <person name="Smith C.L."/>
            <person name="Sneddon T.P."/>
            <person name="Talamas J.A."/>
            <person name="Tenzin P."/>
            <person name="Topham K."/>
            <person name="Venkataraman V."/>
            <person name="Wen G."/>
            <person name="Yamazaki S."/>
            <person name="Young S.K."/>
            <person name="Zeng Q."/>
            <person name="Zimmer A.R."/>
            <person name="Rosenthal A."/>
            <person name="Birren B.W."/>
            <person name="Platzer M."/>
            <person name="Shimizu N."/>
            <person name="Lander E.S."/>
        </authorList>
    </citation>
    <scope>NUCLEOTIDE SEQUENCE [LARGE SCALE GENOMIC DNA]</scope>
</reference>
<reference key="2">
    <citation type="journal article" date="2002" name="Gene Expr. Patterns">
        <title>Exhaustive identification of human class II basic helix-loop-helix proteins by virtual library screening.</title>
        <authorList>
            <person name="McLellan A.S."/>
            <person name="Langlands K."/>
            <person name="Kealey T."/>
        </authorList>
    </citation>
    <scope>IDENTIFICATION</scope>
</reference>
<feature type="chain" id="PRO_0000273317" description="Basic helix-loop-helix transcription factor scleraxis">
    <location>
        <begin position="1"/>
        <end position="201"/>
    </location>
</feature>
<feature type="domain" description="bHLH" evidence="2">
    <location>
        <begin position="75"/>
        <end position="127"/>
    </location>
</feature>
<feature type="region of interest" description="Disordered" evidence="3">
    <location>
        <begin position="1"/>
        <end position="92"/>
    </location>
</feature>
<feature type="region of interest" description="Disordered" evidence="3">
    <location>
        <begin position="148"/>
        <end position="177"/>
    </location>
</feature>
<feature type="compositionally biased region" description="Gly residues" evidence="3">
    <location>
        <begin position="59"/>
        <end position="69"/>
    </location>
</feature>
<feature type="compositionally biased region" description="Basic and acidic residues" evidence="3">
    <location>
        <begin position="70"/>
        <end position="88"/>
    </location>
</feature>
<feature type="compositionally biased region" description="Pro residues" evidence="3">
    <location>
        <begin position="157"/>
        <end position="167"/>
    </location>
</feature>
<keyword id="KW-0010">Activator</keyword>
<keyword id="KW-0217">Developmental protein</keyword>
<keyword id="KW-0238">DNA-binding</keyword>
<keyword id="KW-0539">Nucleus</keyword>
<keyword id="KW-1267">Proteomics identification</keyword>
<keyword id="KW-1185">Reference proteome</keyword>
<keyword id="KW-0804">Transcription</keyword>
<keyword id="KW-0805">Transcription regulation</keyword>
<name>SCX_HUMAN</name>
<proteinExistence type="evidence at protein level"/>
<sequence>MSFATLRPAPPGRYLYPEVSPLSEDEDRGSDSSGSDEKPCRVHAARCGLQGARRRAGGRRAGGGGPGGRPGREPRQRHTANARERDRTNSVNTAFTALRTLIPTEPADRKLSKIETLRLASSYISHLGNVLLAGEACGDGQPCHSGPAFFHAARAGSPPPPPPPPPARDGENTQPKQICTFCLSNQRKLSKDRDRKTAIRS</sequence>
<dbReference type="EMBL" id="AC145291">
    <property type="status" value="NOT_ANNOTATED_CDS"/>
    <property type="molecule type" value="Genomic_DNA"/>
</dbReference>
<dbReference type="EMBL" id="BK000280">
    <property type="protein sequence ID" value="DAA00239.1"/>
    <property type="molecule type" value="Genomic_DNA"/>
</dbReference>
<dbReference type="CCDS" id="CCDS43779.1"/>
<dbReference type="RefSeq" id="NP_001073983.1">
    <property type="nucleotide sequence ID" value="NM_001080514.3"/>
</dbReference>
<dbReference type="RefSeq" id="XP_006716679.1">
    <property type="nucleotide sequence ID" value="XM_006716616.2"/>
</dbReference>
<dbReference type="RefSeq" id="XP_054216982.1">
    <property type="nucleotide sequence ID" value="XM_054361007.1"/>
</dbReference>
<dbReference type="SMR" id="Q7RTU7"/>
<dbReference type="BioGRID" id="568157">
    <property type="interactions" value="6"/>
</dbReference>
<dbReference type="FunCoup" id="Q7RTU7">
    <property type="interactions" value="423"/>
</dbReference>
<dbReference type="IntAct" id="Q7RTU7">
    <property type="interactions" value="3"/>
</dbReference>
<dbReference type="STRING" id="9606.ENSP00000476384"/>
<dbReference type="iPTMnet" id="Q7RTU7"/>
<dbReference type="PhosphoSitePlus" id="Q7RTU7"/>
<dbReference type="BioMuta" id="SCX"/>
<dbReference type="DMDM" id="74749943"/>
<dbReference type="MassIVE" id="Q7RTU7"/>
<dbReference type="PaxDb" id="9606-ENSP00000476384"/>
<dbReference type="PeptideAtlas" id="Q7RTU7"/>
<dbReference type="ProteomicsDB" id="68909"/>
<dbReference type="Antibodypedia" id="72507">
    <property type="antibodies" value="86 antibodies from 21 providers"/>
</dbReference>
<dbReference type="DNASU" id="642658"/>
<dbReference type="Ensembl" id="ENST00000567180.3">
    <property type="protein sequence ID" value="ENSP00000476384.1"/>
    <property type="gene ID" value="ENSG00000260428.3"/>
</dbReference>
<dbReference type="GeneID" id="642658"/>
<dbReference type="KEGG" id="hsa:642658"/>
<dbReference type="MANE-Select" id="ENST00000567180.3">
    <property type="protein sequence ID" value="ENSP00000476384.1"/>
    <property type="RefSeq nucleotide sequence ID" value="NM_001080514.3"/>
    <property type="RefSeq protein sequence ID" value="NP_001073983.1"/>
</dbReference>
<dbReference type="UCSC" id="uc003zbn.4">
    <property type="organism name" value="human"/>
</dbReference>
<dbReference type="AGR" id="HGNC:32322"/>
<dbReference type="CTD" id="642658"/>
<dbReference type="DisGeNET" id="642658"/>
<dbReference type="GeneCards" id="SCX"/>
<dbReference type="HGNC" id="HGNC:32322">
    <property type="gene designation" value="SCX"/>
</dbReference>
<dbReference type="HPA" id="ENSG00000260428">
    <property type="expression patterns" value="Tissue enhanced (brain, thyroid gland)"/>
</dbReference>
<dbReference type="MIM" id="609067">
    <property type="type" value="gene"/>
</dbReference>
<dbReference type="neXtProt" id="NX_Q7RTU7"/>
<dbReference type="OpenTargets" id="ENSG00000260428"/>
<dbReference type="PharmGKB" id="PA142670943"/>
<dbReference type="VEuPathDB" id="HostDB:ENSG00000260428"/>
<dbReference type="eggNOG" id="KOG4029">
    <property type="taxonomic scope" value="Eukaryota"/>
</dbReference>
<dbReference type="GeneTree" id="ENSGT00940000161897"/>
<dbReference type="HOGENOM" id="CLU_115077_0_0_1"/>
<dbReference type="InParanoid" id="Q7RTU7"/>
<dbReference type="OMA" id="FYHHGGG"/>
<dbReference type="OrthoDB" id="6106870at2759"/>
<dbReference type="PAN-GO" id="Q7RTU7">
    <property type="GO annotations" value="4 GO annotations based on evolutionary models"/>
</dbReference>
<dbReference type="PhylomeDB" id="Q7RTU7"/>
<dbReference type="TreeFam" id="TF315153"/>
<dbReference type="PathwayCommons" id="Q7RTU7"/>
<dbReference type="SignaLink" id="Q7RTU7"/>
<dbReference type="SIGNOR" id="Q7RTU7"/>
<dbReference type="BioGRID-ORCS" id="642658">
    <property type="hits" value="12 hits in 755 CRISPR screens"/>
</dbReference>
<dbReference type="GeneWiki" id="LOC642658"/>
<dbReference type="GenomeRNAi" id="642658"/>
<dbReference type="Pharos" id="Q7RTU7">
    <property type="development level" value="Tbio"/>
</dbReference>
<dbReference type="PRO" id="PR:Q7RTU7"/>
<dbReference type="Proteomes" id="UP000005640">
    <property type="component" value="Chromosome 8"/>
</dbReference>
<dbReference type="RNAct" id="Q7RTU7">
    <property type="molecule type" value="protein"/>
</dbReference>
<dbReference type="Bgee" id="ENSG00000260428">
    <property type="expression patterns" value="Expressed in thymus and 93 other cell types or tissues"/>
</dbReference>
<dbReference type="GO" id="GO:0000785">
    <property type="term" value="C:chromatin"/>
    <property type="evidence" value="ECO:0000247"/>
    <property type="project" value="NTNU_SB"/>
</dbReference>
<dbReference type="GO" id="GO:0005634">
    <property type="term" value="C:nucleus"/>
    <property type="evidence" value="ECO:0000314"/>
    <property type="project" value="UniProtKB"/>
</dbReference>
<dbReference type="GO" id="GO:0005667">
    <property type="term" value="C:transcription regulator complex"/>
    <property type="evidence" value="ECO:0000314"/>
    <property type="project" value="UniProtKB"/>
</dbReference>
<dbReference type="GO" id="GO:0043425">
    <property type="term" value="F:bHLH transcription factor binding"/>
    <property type="evidence" value="ECO:0000353"/>
    <property type="project" value="UniProtKB"/>
</dbReference>
<dbReference type="GO" id="GO:0003677">
    <property type="term" value="F:DNA binding"/>
    <property type="evidence" value="ECO:0000250"/>
    <property type="project" value="UniProtKB"/>
</dbReference>
<dbReference type="GO" id="GO:0001228">
    <property type="term" value="F:DNA-binding transcription activator activity, RNA polymerase II-specific"/>
    <property type="evidence" value="ECO:0000314"/>
    <property type="project" value="GO_Central"/>
</dbReference>
<dbReference type="GO" id="GO:0000981">
    <property type="term" value="F:DNA-binding transcription factor activity, RNA polymerase II-specific"/>
    <property type="evidence" value="ECO:0000247"/>
    <property type="project" value="NTNU_SB"/>
</dbReference>
<dbReference type="GO" id="GO:0070888">
    <property type="term" value="F:E-box binding"/>
    <property type="evidence" value="ECO:0007669"/>
    <property type="project" value="Ensembl"/>
</dbReference>
<dbReference type="GO" id="GO:0046983">
    <property type="term" value="F:protein dimerization activity"/>
    <property type="evidence" value="ECO:0007669"/>
    <property type="project" value="InterPro"/>
</dbReference>
<dbReference type="GO" id="GO:0000977">
    <property type="term" value="F:RNA polymerase II transcription regulatory region sequence-specific DNA binding"/>
    <property type="evidence" value="ECO:0000318"/>
    <property type="project" value="GO_Central"/>
</dbReference>
<dbReference type="GO" id="GO:0043565">
    <property type="term" value="F:sequence-specific DNA binding"/>
    <property type="evidence" value="ECO:0000250"/>
    <property type="project" value="UniProtKB"/>
</dbReference>
<dbReference type="GO" id="GO:0030509">
    <property type="term" value="P:BMP signaling pathway"/>
    <property type="evidence" value="ECO:0000250"/>
    <property type="project" value="UniProtKB"/>
</dbReference>
<dbReference type="GO" id="GO:0030154">
    <property type="term" value="P:cell differentiation"/>
    <property type="evidence" value="ECO:0000250"/>
    <property type="project" value="UniProtKB"/>
</dbReference>
<dbReference type="GO" id="GO:0071320">
    <property type="term" value="P:cellular response to cAMP"/>
    <property type="evidence" value="ECO:0007669"/>
    <property type="project" value="Ensembl"/>
</dbReference>
<dbReference type="GO" id="GO:0071372">
    <property type="term" value="P:cellular response to follicle-stimulating hormone stimulus"/>
    <property type="evidence" value="ECO:0007669"/>
    <property type="project" value="Ensembl"/>
</dbReference>
<dbReference type="GO" id="GO:0071260">
    <property type="term" value="P:cellular response to mechanical stimulus"/>
    <property type="evidence" value="ECO:0007669"/>
    <property type="project" value="Ensembl"/>
</dbReference>
<dbReference type="GO" id="GO:0071560">
    <property type="term" value="P:cellular response to transforming growth factor beta stimulus"/>
    <property type="evidence" value="ECO:0007669"/>
    <property type="project" value="Ensembl"/>
</dbReference>
<dbReference type="GO" id="GO:0002062">
    <property type="term" value="P:chondrocyte differentiation"/>
    <property type="evidence" value="ECO:0000250"/>
    <property type="project" value="UniProtKB"/>
</dbReference>
<dbReference type="GO" id="GO:0030199">
    <property type="term" value="P:collagen fibril organization"/>
    <property type="evidence" value="ECO:0000250"/>
    <property type="project" value="UniProtKB"/>
</dbReference>
<dbReference type="GO" id="GO:0035993">
    <property type="term" value="P:deltoid tuberosity development"/>
    <property type="evidence" value="ECO:0000250"/>
    <property type="project" value="UniProtKB"/>
</dbReference>
<dbReference type="GO" id="GO:0032502">
    <property type="term" value="P:developmental process"/>
    <property type="evidence" value="ECO:0000318"/>
    <property type="project" value="GO_Central"/>
</dbReference>
<dbReference type="GO" id="GO:0006351">
    <property type="term" value="P:DNA-templated transcription"/>
    <property type="evidence" value="ECO:0000250"/>
    <property type="project" value="UniProtKB"/>
</dbReference>
<dbReference type="GO" id="GO:0048706">
    <property type="term" value="P:embryonic skeletal system development"/>
    <property type="evidence" value="ECO:0007669"/>
    <property type="project" value="Ensembl"/>
</dbReference>
<dbReference type="GO" id="GO:0001958">
    <property type="term" value="P:endochondral ossification"/>
    <property type="evidence" value="ECO:0000250"/>
    <property type="project" value="UniProtKB"/>
</dbReference>
<dbReference type="GO" id="GO:0060325">
    <property type="term" value="P:face morphogenesis"/>
    <property type="evidence" value="ECO:0007669"/>
    <property type="project" value="Ensembl"/>
</dbReference>
<dbReference type="GO" id="GO:0003188">
    <property type="term" value="P:heart valve formation"/>
    <property type="evidence" value="ECO:0000250"/>
    <property type="project" value="UniProtKB"/>
</dbReference>
<dbReference type="GO" id="GO:0003179">
    <property type="term" value="P:heart valve morphogenesis"/>
    <property type="evidence" value="ECO:0000250"/>
    <property type="project" value="UniProtKB"/>
</dbReference>
<dbReference type="GO" id="GO:0001707">
    <property type="term" value="P:mesoderm formation"/>
    <property type="evidence" value="ECO:0000250"/>
    <property type="project" value="UniProtKB"/>
</dbReference>
<dbReference type="GO" id="GO:0043066">
    <property type="term" value="P:negative regulation of apoptotic process"/>
    <property type="evidence" value="ECO:0000250"/>
    <property type="project" value="UniProtKB"/>
</dbReference>
<dbReference type="GO" id="GO:0045892">
    <property type="term" value="P:negative regulation of DNA-templated transcription"/>
    <property type="evidence" value="ECO:0007669"/>
    <property type="project" value="Ensembl"/>
</dbReference>
<dbReference type="GO" id="GO:0010629">
    <property type="term" value="P:negative regulation of gene expression"/>
    <property type="evidence" value="ECO:0007669"/>
    <property type="project" value="Ensembl"/>
</dbReference>
<dbReference type="GO" id="GO:0061036">
    <property type="term" value="P:positive regulation of cartilage development"/>
    <property type="evidence" value="ECO:0000250"/>
    <property type="project" value="UniProtKB"/>
</dbReference>
<dbReference type="GO" id="GO:0008284">
    <property type="term" value="P:positive regulation of cell population proliferation"/>
    <property type="evidence" value="ECO:0000250"/>
    <property type="project" value="UniProtKB"/>
</dbReference>
<dbReference type="GO" id="GO:0032967">
    <property type="term" value="P:positive regulation of collagen biosynthetic process"/>
    <property type="evidence" value="ECO:0000250"/>
    <property type="project" value="UniProtKB"/>
</dbReference>
<dbReference type="GO" id="GO:0045893">
    <property type="term" value="P:positive regulation of DNA-templated transcription"/>
    <property type="evidence" value="ECO:0000250"/>
    <property type="project" value="UniProtKB"/>
</dbReference>
<dbReference type="GO" id="GO:2000543">
    <property type="term" value="P:positive regulation of gastrulation"/>
    <property type="evidence" value="ECO:0000250"/>
    <property type="project" value="UniProtKB"/>
</dbReference>
<dbReference type="GO" id="GO:0010628">
    <property type="term" value="P:positive regulation of gene expression"/>
    <property type="evidence" value="ECO:0000250"/>
    <property type="project" value="UniProtKB"/>
</dbReference>
<dbReference type="GO" id="GO:0045944">
    <property type="term" value="P:positive regulation of transcription by RNA polymerase II"/>
    <property type="evidence" value="ECO:0000314"/>
    <property type="project" value="GO_Central"/>
</dbReference>
<dbReference type="GO" id="GO:0061035">
    <property type="term" value="P:regulation of cartilage development"/>
    <property type="evidence" value="ECO:0000250"/>
    <property type="project" value="UniProtKB"/>
</dbReference>
<dbReference type="GO" id="GO:0006357">
    <property type="term" value="P:regulation of transcription by RNA polymerase II"/>
    <property type="evidence" value="ECO:0000318"/>
    <property type="project" value="GO_Central"/>
</dbReference>
<dbReference type="GO" id="GO:0061056">
    <property type="term" value="P:sclerotome development"/>
    <property type="evidence" value="ECO:0007669"/>
    <property type="project" value="Ensembl"/>
</dbReference>
<dbReference type="GO" id="GO:0060009">
    <property type="term" value="P:Sertoli cell development"/>
    <property type="evidence" value="ECO:0007669"/>
    <property type="project" value="Ensembl"/>
</dbReference>
<dbReference type="GO" id="GO:0060008">
    <property type="term" value="P:Sertoli cell differentiation"/>
    <property type="evidence" value="ECO:0000250"/>
    <property type="project" value="UniProtKB"/>
</dbReference>
<dbReference type="GO" id="GO:0035914">
    <property type="term" value="P:skeletal muscle cell differentiation"/>
    <property type="evidence" value="ECO:0007669"/>
    <property type="project" value="Ensembl"/>
</dbReference>
<dbReference type="GO" id="GO:0035990">
    <property type="term" value="P:tendon cell differentiation"/>
    <property type="evidence" value="ECO:0000250"/>
    <property type="project" value="UniProtKB"/>
</dbReference>
<dbReference type="GO" id="GO:0035989">
    <property type="term" value="P:tendon development"/>
    <property type="evidence" value="ECO:0000250"/>
    <property type="project" value="UniProtKB"/>
</dbReference>
<dbReference type="GO" id="GO:0035992">
    <property type="term" value="P:tendon formation"/>
    <property type="evidence" value="ECO:0000250"/>
    <property type="project" value="UniProtKB"/>
</dbReference>
<dbReference type="GO" id="GO:0001894">
    <property type="term" value="P:tissue homeostasis"/>
    <property type="evidence" value="ECO:0000250"/>
    <property type="project" value="UniProtKB"/>
</dbReference>
<dbReference type="CDD" id="cd18951">
    <property type="entry name" value="bHLH_TS_scleraxis"/>
    <property type="match status" value="1"/>
</dbReference>
<dbReference type="FunFam" id="4.10.280.10:FF:000010">
    <property type="entry name" value="Scleraxis bHLH transcription factor"/>
    <property type="match status" value="1"/>
</dbReference>
<dbReference type="Gene3D" id="4.10.280.10">
    <property type="entry name" value="Helix-loop-helix DNA-binding domain"/>
    <property type="match status" value="1"/>
</dbReference>
<dbReference type="InterPro" id="IPR011598">
    <property type="entry name" value="bHLH_dom"/>
</dbReference>
<dbReference type="InterPro" id="IPR050283">
    <property type="entry name" value="E-box_TF_Regulators"/>
</dbReference>
<dbReference type="InterPro" id="IPR036638">
    <property type="entry name" value="HLH_DNA-bd_sf"/>
</dbReference>
<dbReference type="PANTHER" id="PTHR23349:SF5">
    <property type="entry name" value="BASIC HELIX-LOOP-HELIX TRANSCRIPTION FACTOR SCLERAXIS"/>
    <property type="match status" value="1"/>
</dbReference>
<dbReference type="PANTHER" id="PTHR23349">
    <property type="entry name" value="BASIC HELIX-LOOP-HELIX TRANSCRIPTION FACTOR, TWIST"/>
    <property type="match status" value="1"/>
</dbReference>
<dbReference type="Pfam" id="PF00010">
    <property type="entry name" value="HLH"/>
    <property type="match status" value="1"/>
</dbReference>
<dbReference type="SMART" id="SM00353">
    <property type="entry name" value="HLH"/>
    <property type="match status" value="1"/>
</dbReference>
<dbReference type="SUPFAM" id="SSF47459">
    <property type="entry name" value="HLH, helix-loop-helix DNA-binding domain"/>
    <property type="match status" value="1"/>
</dbReference>
<dbReference type="PROSITE" id="PS50888">
    <property type="entry name" value="BHLH"/>
    <property type="match status" value="1"/>
</dbReference>
<comment type="function">
    <text evidence="1">Plays an early essential role in mesoderm formation, as well as a later role in formation of somite-derived chondrogenic lineages.</text>
</comment>
<comment type="subunit">
    <text evidence="1">Efficient DNA binding requires dimerization with another bHLH protein. Dimerizes and binds the E-box consensus sequence with E12 (By similarity).</text>
</comment>
<comment type="interaction">
    <interactant intactId="EBI-17492262">
        <id>Q7RTU7</id>
    </interactant>
    <interactant intactId="EBI-17491620">
        <id>P13349</id>
        <label>MYF5</label>
    </interactant>
    <organismsDiffer>false</organismsDiffer>
    <experiments>3</experiments>
</comment>
<comment type="interaction">
    <interactant intactId="EBI-17492262">
        <id>Q7RTU7</id>
    </interactant>
    <interactant intactId="EBI-713635">
        <id>O43639</id>
        <label>NCK2</label>
    </interactant>
    <organismsDiffer>false</organismsDiffer>
    <experiments>3</experiments>
</comment>
<comment type="interaction">
    <interactant intactId="EBI-17492262">
        <id>Q7RTU7</id>
    </interactant>
    <interactant intactId="EBI-13636688">
        <id>P15884-3</id>
        <label>TCF4</label>
    </interactant>
    <organismsDiffer>false</organismsDiffer>
    <experiments>3</experiments>
</comment>
<comment type="subcellular location">
    <subcellularLocation>
        <location evidence="2">Nucleus</location>
    </subcellularLocation>
</comment>
<evidence type="ECO:0000250" key="1"/>
<evidence type="ECO:0000255" key="2">
    <source>
        <dbReference type="PROSITE-ProRule" id="PRU00981"/>
    </source>
</evidence>
<evidence type="ECO:0000256" key="3">
    <source>
        <dbReference type="SAM" id="MobiDB-lite"/>
    </source>
</evidence>
<organism>
    <name type="scientific">Homo sapiens</name>
    <name type="common">Human</name>
    <dbReference type="NCBI Taxonomy" id="9606"/>
    <lineage>
        <taxon>Eukaryota</taxon>
        <taxon>Metazoa</taxon>
        <taxon>Chordata</taxon>
        <taxon>Craniata</taxon>
        <taxon>Vertebrata</taxon>
        <taxon>Euteleostomi</taxon>
        <taxon>Mammalia</taxon>
        <taxon>Eutheria</taxon>
        <taxon>Euarchontoglires</taxon>
        <taxon>Primates</taxon>
        <taxon>Haplorrhini</taxon>
        <taxon>Catarrhini</taxon>
        <taxon>Hominidae</taxon>
        <taxon>Homo</taxon>
    </lineage>
</organism>